<reference key="1">
    <citation type="journal article" date="1993" name="J. Mol. Biol.">
        <title>The gene locus of the proton-translocating NADH: ubiquinone oxidoreductase in Escherichia coli. Organization of the 14 genes and relationship between the derived proteins and subunits of mitochondrial complex I.</title>
        <authorList>
            <person name="Weidner U."/>
            <person name="Geier S."/>
            <person name="Ptock A."/>
            <person name="Friedrich T."/>
            <person name="Leif H."/>
            <person name="Weiss H."/>
        </authorList>
    </citation>
    <scope>NUCLEOTIDE SEQUENCE [GENOMIC DNA]</scope>
    <source>
        <strain>K12 / AN387</strain>
    </source>
</reference>
<reference key="2">
    <citation type="journal article" date="1997" name="DNA Res.">
        <title>Construction of a contiguous 874-kb sequence of the Escherichia coli-K12 genome corresponding to 50.0-68.8 min on the linkage map and analysis of its sequence features.</title>
        <authorList>
            <person name="Yamamoto Y."/>
            <person name="Aiba H."/>
            <person name="Baba T."/>
            <person name="Hayashi K."/>
            <person name="Inada T."/>
            <person name="Isono K."/>
            <person name="Itoh T."/>
            <person name="Kimura S."/>
            <person name="Kitagawa M."/>
            <person name="Makino K."/>
            <person name="Miki T."/>
            <person name="Mitsuhashi N."/>
            <person name="Mizobuchi K."/>
            <person name="Mori H."/>
            <person name="Nakade S."/>
            <person name="Nakamura Y."/>
            <person name="Nashimoto H."/>
            <person name="Oshima T."/>
            <person name="Oyama S."/>
            <person name="Saito N."/>
            <person name="Sampei G."/>
            <person name="Satoh Y."/>
            <person name="Sivasundaram S."/>
            <person name="Tagami H."/>
            <person name="Takahashi H."/>
            <person name="Takeda J."/>
            <person name="Takemoto K."/>
            <person name="Uehara K."/>
            <person name="Wada C."/>
            <person name="Yamagata S."/>
            <person name="Horiuchi T."/>
        </authorList>
    </citation>
    <scope>NUCLEOTIDE SEQUENCE [LARGE SCALE GENOMIC DNA]</scope>
    <source>
        <strain>K12 / W3110 / ATCC 27325 / DSM 5911</strain>
    </source>
</reference>
<reference key="3">
    <citation type="journal article" date="1997" name="Science">
        <title>The complete genome sequence of Escherichia coli K-12.</title>
        <authorList>
            <person name="Blattner F.R."/>
            <person name="Plunkett G. III"/>
            <person name="Bloch C.A."/>
            <person name="Perna N.T."/>
            <person name="Burland V."/>
            <person name="Riley M."/>
            <person name="Collado-Vides J."/>
            <person name="Glasner J.D."/>
            <person name="Rode C.K."/>
            <person name="Mayhew G.F."/>
            <person name="Gregor J."/>
            <person name="Davis N.W."/>
            <person name="Kirkpatrick H.A."/>
            <person name="Goeden M.A."/>
            <person name="Rose D.J."/>
            <person name="Mau B."/>
            <person name="Shao Y."/>
        </authorList>
    </citation>
    <scope>NUCLEOTIDE SEQUENCE [LARGE SCALE GENOMIC DNA]</scope>
    <source>
        <strain>K12 / MG1655 / ATCC 47076</strain>
    </source>
</reference>
<reference key="4">
    <citation type="journal article" date="2006" name="Mol. Syst. Biol.">
        <title>Highly accurate genome sequences of Escherichia coli K-12 strains MG1655 and W3110.</title>
        <authorList>
            <person name="Hayashi K."/>
            <person name="Morooka N."/>
            <person name="Yamamoto Y."/>
            <person name="Fujita K."/>
            <person name="Isono K."/>
            <person name="Choi S."/>
            <person name="Ohtsubo E."/>
            <person name="Baba T."/>
            <person name="Wanner B.L."/>
            <person name="Mori H."/>
            <person name="Horiuchi T."/>
        </authorList>
    </citation>
    <scope>NUCLEOTIDE SEQUENCE [LARGE SCALE GENOMIC DNA]</scope>
    <source>
        <strain>K12 / W3110 / ATCC 27325 / DSM 5911</strain>
    </source>
</reference>
<reference key="5">
    <citation type="journal article" date="2005" name="Science">
        <title>Global topology analysis of the Escherichia coli inner membrane proteome.</title>
        <authorList>
            <person name="Daley D.O."/>
            <person name="Rapp M."/>
            <person name="Granseth E."/>
            <person name="Melen K."/>
            <person name="Drew D."/>
            <person name="von Heijne G."/>
        </authorList>
    </citation>
    <scope>TOPOLOGY [LARGE SCALE ANALYSIS]</scope>
    <source>
        <strain>K12 / MG1655 / ATCC 47076</strain>
    </source>
</reference>
<dbReference type="EC" id="7.1.1.-"/>
<dbReference type="EMBL" id="X68301">
    <property type="protein sequence ID" value="CAA48367.1"/>
    <property type="molecule type" value="Genomic_DNA"/>
</dbReference>
<dbReference type="EMBL" id="U00096">
    <property type="protein sequence ID" value="AAC75342.1"/>
    <property type="molecule type" value="Genomic_DNA"/>
</dbReference>
<dbReference type="EMBL" id="AP009048">
    <property type="protein sequence ID" value="BAA16110.1"/>
    <property type="molecule type" value="Genomic_DNA"/>
</dbReference>
<dbReference type="PIR" id="H64999">
    <property type="entry name" value="H64999"/>
</dbReference>
<dbReference type="RefSeq" id="NP_416785.1">
    <property type="nucleotide sequence ID" value="NC_000913.3"/>
</dbReference>
<dbReference type="RefSeq" id="WP_000118507.1">
    <property type="nucleotide sequence ID" value="NZ_STEB01000008.1"/>
</dbReference>
<dbReference type="PDB" id="7NYH">
    <property type="method" value="EM"/>
    <property type="resolution" value="3.60 A"/>
    <property type="chains" value="H=1-325"/>
</dbReference>
<dbReference type="PDB" id="7NYR">
    <property type="method" value="EM"/>
    <property type="resolution" value="3.30 A"/>
    <property type="chains" value="H=1-325"/>
</dbReference>
<dbReference type="PDB" id="7NYU">
    <property type="method" value="EM"/>
    <property type="resolution" value="3.80 A"/>
    <property type="chains" value="H=1-325"/>
</dbReference>
<dbReference type="PDB" id="7NYV">
    <property type="method" value="EM"/>
    <property type="resolution" value="3.70 A"/>
    <property type="chains" value="H=1-325"/>
</dbReference>
<dbReference type="PDB" id="7P61">
    <property type="method" value="EM"/>
    <property type="resolution" value="3.20 A"/>
    <property type="chains" value="H=1-325"/>
</dbReference>
<dbReference type="PDB" id="7P62">
    <property type="method" value="EM"/>
    <property type="resolution" value="3.60 A"/>
    <property type="chains" value="H=1-325"/>
</dbReference>
<dbReference type="PDB" id="7P63">
    <property type="method" value="EM"/>
    <property type="resolution" value="3.40 A"/>
    <property type="chains" value="H=1-325"/>
</dbReference>
<dbReference type="PDB" id="7P64">
    <property type="method" value="EM"/>
    <property type="resolution" value="2.50 A"/>
    <property type="chains" value="H=1-325"/>
</dbReference>
<dbReference type="PDB" id="7P69">
    <property type="method" value="EM"/>
    <property type="resolution" value="3.00 A"/>
    <property type="chains" value="H=1-325"/>
</dbReference>
<dbReference type="PDB" id="7P7C">
    <property type="method" value="EM"/>
    <property type="resolution" value="2.40 A"/>
    <property type="chains" value="H=1-325"/>
</dbReference>
<dbReference type="PDB" id="7P7E">
    <property type="method" value="EM"/>
    <property type="resolution" value="2.70 A"/>
    <property type="chains" value="H=1-325"/>
</dbReference>
<dbReference type="PDB" id="7P7J">
    <property type="method" value="EM"/>
    <property type="resolution" value="2.70 A"/>
    <property type="chains" value="H=1-325"/>
</dbReference>
<dbReference type="PDB" id="7P7K">
    <property type="method" value="EM"/>
    <property type="resolution" value="3.10 A"/>
    <property type="chains" value="H=1-325"/>
</dbReference>
<dbReference type="PDB" id="7P7L">
    <property type="method" value="EM"/>
    <property type="resolution" value="3.00 A"/>
    <property type="chains" value="H=1-325"/>
</dbReference>
<dbReference type="PDB" id="7P7M">
    <property type="method" value="EM"/>
    <property type="resolution" value="3.20 A"/>
    <property type="chains" value="H=1-325"/>
</dbReference>
<dbReference type="PDB" id="7Z7R">
    <property type="method" value="EM"/>
    <property type="resolution" value="3.36 A"/>
    <property type="chains" value="H=1-325"/>
</dbReference>
<dbReference type="PDB" id="7Z7S">
    <property type="method" value="EM"/>
    <property type="resolution" value="2.40 A"/>
    <property type="chains" value="H=1-325"/>
</dbReference>
<dbReference type="PDB" id="7Z7T">
    <property type="method" value="EM"/>
    <property type="resolution" value="3.10 A"/>
    <property type="chains" value="H=1-325"/>
</dbReference>
<dbReference type="PDB" id="7Z7V">
    <property type="method" value="EM"/>
    <property type="resolution" value="2.29 A"/>
    <property type="chains" value="H=1-325"/>
</dbReference>
<dbReference type="PDB" id="7Z80">
    <property type="method" value="EM"/>
    <property type="resolution" value="2.93 A"/>
    <property type="chains" value="H=1-325"/>
</dbReference>
<dbReference type="PDB" id="7Z83">
    <property type="method" value="EM"/>
    <property type="resolution" value="2.88 A"/>
    <property type="chains" value="H=1-325"/>
</dbReference>
<dbReference type="PDB" id="7Z84">
    <property type="method" value="EM"/>
    <property type="resolution" value="2.87 A"/>
    <property type="chains" value="H=1-325"/>
</dbReference>
<dbReference type="PDB" id="7ZC5">
    <property type="method" value="EM"/>
    <property type="resolution" value="3.00 A"/>
    <property type="chains" value="H=1-325"/>
</dbReference>
<dbReference type="PDB" id="7ZCI">
    <property type="method" value="EM"/>
    <property type="resolution" value="2.69 A"/>
    <property type="chains" value="H=1-325"/>
</dbReference>
<dbReference type="PDBsum" id="7NYH"/>
<dbReference type="PDBsum" id="7NYR"/>
<dbReference type="PDBsum" id="7NYU"/>
<dbReference type="PDBsum" id="7NYV"/>
<dbReference type="PDBsum" id="7P61"/>
<dbReference type="PDBsum" id="7P62"/>
<dbReference type="PDBsum" id="7P63"/>
<dbReference type="PDBsum" id="7P64"/>
<dbReference type="PDBsum" id="7P69"/>
<dbReference type="PDBsum" id="7P7C"/>
<dbReference type="PDBsum" id="7P7E"/>
<dbReference type="PDBsum" id="7P7J"/>
<dbReference type="PDBsum" id="7P7K"/>
<dbReference type="PDBsum" id="7P7L"/>
<dbReference type="PDBsum" id="7P7M"/>
<dbReference type="PDBsum" id="7Z7R"/>
<dbReference type="PDBsum" id="7Z7S"/>
<dbReference type="PDBsum" id="7Z7T"/>
<dbReference type="PDBsum" id="7Z7V"/>
<dbReference type="PDBsum" id="7Z80"/>
<dbReference type="PDBsum" id="7Z83"/>
<dbReference type="PDBsum" id="7Z84"/>
<dbReference type="PDBsum" id="7ZC5"/>
<dbReference type="PDBsum" id="7ZCI"/>
<dbReference type="EMDB" id="EMD-12652"/>
<dbReference type="EMDB" id="EMD-12653"/>
<dbReference type="EMDB" id="EMD-12654"/>
<dbReference type="EMDB" id="EMD-12655"/>
<dbReference type="SMR" id="P0AFD4"/>
<dbReference type="BioGRID" id="4260511">
    <property type="interactions" value="41"/>
</dbReference>
<dbReference type="ComplexPortal" id="CPX-243">
    <property type="entry name" value="Respiratory chain complex I"/>
</dbReference>
<dbReference type="FunCoup" id="P0AFD4">
    <property type="interactions" value="265"/>
</dbReference>
<dbReference type="IntAct" id="P0AFD4">
    <property type="interactions" value="1"/>
</dbReference>
<dbReference type="STRING" id="511145.b2282"/>
<dbReference type="TCDB" id="3.D.1.1.1">
    <property type="family name" value="the h+ or na+-translocating nadh dehydrogenase (ndh) family"/>
</dbReference>
<dbReference type="jPOST" id="P0AFD4"/>
<dbReference type="PaxDb" id="511145-b2282"/>
<dbReference type="DNASU" id="946761"/>
<dbReference type="EnsemblBacteria" id="AAC75342">
    <property type="protein sequence ID" value="AAC75342"/>
    <property type="gene ID" value="b2282"/>
</dbReference>
<dbReference type="GeneID" id="93774892"/>
<dbReference type="GeneID" id="946761"/>
<dbReference type="KEGG" id="ecj:JW2277"/>
<dbReference type="KEGG" id="eco:b2282"/>
<dbReference type="KEGG" id="ecoc:C3026_12735"/>
<dbReference type="PATRIC" id="fig|1411691.4.peg.4454"/>
<dbReference type="EchoBASE" id="EB2012"/>
<dbReference type="eggNOG" id="COG1005">
    <property type="taxonomic scope" value="Bacteria"/>
</dbReference>
<dbReference type="HOGENOM" id="CLU_015134_0_1_6"/>
<dbReference type="InParanoid" id="P0AFD4"/>
<dbReference type="OMA" id="WSGWASN"/>
<dbReference type="OrthoDB" id="9803734at2"/>
<dbReference type="PhylomeDB" id="P0AFD4"/>
<dbReference type="BioCyc" id="EcoCyc:NUOH-MONOMER"/>
<dbReference type="BioCyc" id="MetaCyc:NUOH-MONOMER"/>
<dbReference type="PRO" id="PR:P0AFD4"/>
<dbReference type="Proteomes" id="UP000000625">
    <property type="component" value="Chromosome"/>
</dbReference>
<dbReference type="GO" id="GO:0016020">
    <property type="term" value="C:membrane"/>
    <property type="evidence" value="ECO:0000314"/>
    <property type="project" value="ComplexPortal"/>
</dbReference>
<dbReference type="GO" id="GO:0030964">
    <property type="term" value="C:NADH dehydrogenase complex"/>
    <property type="evidence" value="ECO:0000314"/>
    <property type="project" value="EcoliWiki"/>
</dbReference>
<dbReference type="GO" id="GO:0005886">
    <property type="term" value="C:plasma membrane"/>
    <property type="evidence" value="ECO:0000314"/>
    <property type="project" value="EcoCyc"/>
</dbReference>
<dbReference type="GO" id="GO:0045271">
    <property type="term" value="C:respiratory chain complex I"/>
    <property type="evidence" value="ECO:0000314"/>
    <property type="project" value="EcoCyc"/>
</dbReference>
<dbReference type="GO" id="GO:0016655">
    <property type="term" value="F:oxidoreductase activity, acting on NAD(P)H, quinone or similar compound as acceptor"/>
    <property type="evidence" value="ECO:0007669"/>
    <property type="project" value="UniProtKB-UniRule"/>
</dbReference>
<dbReference type="GO" id="GO:0048038">
    <property type="term" value="F:quinone binding"/>
    <property type="evidence" value="ECO:0007669"/>
    <property type="project" value="UniProtKB-KW"/>
</dbReference>
<dbReference type="GO" id="GO:0009060">
    <property type="term" value="P:aerobic respiration"/>
    <property type="evidence" value="ECO:0000315"/>
    <property type="project" value="EcoCyc"/>
</dbReference>
<dbReference type="GO" id="GO:1902600">
    <property type="term" value="P:proton transmembrane transport"/>
    <property type="evidence" value="ECO:0007669"/>
    <property type="project" value="GOC"/>
</dbReference>
<dbReference type="GO" id="GO:0022904">
    <property type="term" value="P:respiratory electron transport chain"/>
    <property type="evidence" value="ECO:0000314"/>
    <property type="project" value="ComplexPortal"/>
</dbReference>
<dbReference type="HAMAP" id="MF_01350">
    <property type="entry name" value="NDH1_NuoH"/>
    <property type="match status" value="1"/>
</dbReference>
<dbReference type="InterPro" id="IPR001694">
    <property type="entry name" value="NADH_UbQ_OxRdtase_su1/FPO"/>
</dbReference>
<dbReference type="InterPro" id="IPR018086">
    <property type="entry name" value="NADH_UbQ_OxRdtase_su1_CS"/>
</dbReference>
<dbReference type="NCBIfam" id="NF004740">
    <property type="entry name" value="PRK06076.1-1"/>
    <property type="match status" value="1"/>
</dbReference>
<dbReference type="NCBIfam" id="NF004741">
    <property type="entry name" value="PRK06076.1-2"/>
    <property type="match status" value="1"/>
</dbReference>
<dbReference type="PANTHER" id="PTHR11432">
    <property type="entry name" value="NADH DEHYDROGENASE SUBUNIT 1"/>
    <property type="match status" value="1"/>
</dbReference>
<dbReference type="PANTHER" id="PTHR11432:SF3">
    <property type="entry name" value="NADH-UBIQUINONE OXIDOREDUCTASE CHAIN 1"/>
    <property type="match status" value="1"/>
</dbReference>
<dbReference type="Pfam" id="PF00146">
    <property type="entry name" value="NADHdh"/>
    <property type="match status" value="1"/>
</dbReference>
<dbReference type="PROSITE" id="PS00667">
    <property type="entry name" value="COMPLEX1_ND1_1"/>
    <property type="match status" value="1"/>
</dbReference>
<dbReference type="PROSITE" id="PS00668">
    <property type="entry name" value="COMPLEX1_ND1_2"/>
    <property type="match status" value="1"/>
</dbReference>
<accession>P0AFD4</accession>
<accession>P33603</accession>
<accession>P78307</accession>
<protein>
    <recommendedName>
        <fullName>NADH-quinone oxidoreductase subunit H</fullName>
        <ecNumber>7.1.1.-</ecNumber>
    </recommendedName>
    <alternativeName>
        <fullName>NADH dehydrogenase I subunit H</fullName>
    </alternativeName>
    <alternativeName>
        <fullName>NDH-1 subunit H</fullName>
    </alternativeName>
    <alternativeName>
        <fullName>NUO8</fullName>
    </alternativeName>
</protein>
<proteinExistence type="evidence at protein level"/>
<name>NUOH_ECOLI</name>
<gene>
    <name type="primary">nuoH</name>
    <name type="ordered locus">b2282</name>
    <name type="ordered locus">JW2277</name>
</gene>
<sequence length="325" mass="36219">MSWISPELIEILLTILKAVVILLVVVTCGAFMSFGERRLLGLFQNRYGPNRVGWGGSLQLVADMIKMFFKEDWIPKFSDRVIFTLAPMIAFTSLLLAFAIVPVSPGWVVADLNIGILFFLMMAGLAVYAVLFAGWSSNNKYSLLGAMRASAQTLSYEVFLGLSLMGVVAQAGSFNMTDIVNSQAHVWNVIPQFFGFITFAIAGVAVCHRHPFDQPEAEQELADGYHIEYSGMKFGLFFVGEYIGIVTISALMVTLFFGGWQGPLLPPFIWFALKTAFFMMMFILIRASLPRPRYDQVMSFGWKICLPLTLINLLVTAAVILWQAQ</sequence>
<feature type="chain" id="PRO_0000117523" description="NADH-quinone oxidoreductase subunit H">
    <location>
        <begin position="1"/>
        <end position="325"/>
    </location>
</feature>
<feature type="transmembrane region" description="Helical" evidence="1">
    <location>
        <begin position="11"/>
        <end position="31"/>
    </location>
</feature>
<feature type="transmembrane region" description="Helical" evidence="1">
    <location>
        <begin position="81"/>
        <end position="101"/>
    </location>
</feature>
<feature type="transmembrane region" description="Helical" evidence="1">
    <location>
        <begin position="114"/>
        <end position="134"/>
    </location>
</feature>
<feature type="transmembrane region" description="Helical" evidence="1">
    <location>
        <begin position="154"/>
        <end position="174"/>
    </location>
</feature>
<feature type="transmembrane region" description="Helical" evidence="1">
    <location>
        <begin position="186"/>
        <end position="206"/>
    </location>
</feature>
<feature type="transmembrane region" description="Helical" evidence="1">
    <location>
        <begin position="237"/>
        <end position="257"/>
    </location>
</feature>
<feature type="transmembrane region" description="Helical" evidence="1">
    <location>
        <begin position="265"/>
        <end position="285"/>
    </location>
</feature>
<feature type="transmembrane region" description="Helical" evidence="1">
    <location>
        <begin position="304"/>
        <end position="324"/>
    </location>
</feature>
<feature type="sequence conflict" description="In Ref. 1; CAA48367." evidence="2" ref="1">
    <original>GE</original>
    <variation>AK</variation>
    <location>
        <begin position="35"/>
        <end position="36"/>
    </location>
</feature>
<feature type="sequence conflict" description="In Ref. 1; CAA48367." evidence="2" ref="1">
    <original>G</original>
    <variation>A</variation>
    <location>
        <position position="53"/>
    </location>
</feature>
<feature type="helix" evidence="4">
    <location>
        <begin position="6"/>
        <end position="43"/>
    </location>
</feature>
<feature type="turn" evidence="4">
    <location>
        <begin position="51"/>
        <end position="53"/>
    </location>
</feature>
<feature type="helix" evidence="4">
    <location>
        <begin position="54"/>
        <end position="56"/>
    </location>
</feature>
<feature type="helix" evidence="4">
    <location>
        <begin position="59"/>
        <end position="69"/>
    </location>
</feature>
<feature type="strand" evidence="6">
    <location>
        <begin position="76"/>
        <end position="78"/>
    </location>
</feature>
<feature type="helix" evidence="4">
    <location>
        <begin position="80"/>
        <end position="98"/>
    </location>
</feature>
<feature type="strand" evidence="3">
    <location>
        <begin position="105"/>
        <end position="107"/>
    </location>
</feature>
<feature type="helix" evidence="4">
    <location>
        <begin position="116"/>
        <end position="136"/>
    </location>
</feature>
<feature type="helix" evidence="4">
    <location>
        <begin position="140"/>
        <end position="171"/>
    </location>
</feature>
<feature type="strand" evidence="5">
    <location>
        <begin position="172"/>
        <end position="174"/>
    </location>
</feature>
<feature type="helix" evidence="4">
    <location>
        <begin position="176"/>
        <end position="181"/>
    </location>
</feature>
<feature type="strand" evidence="4">
    <location>
        <begin position="184"/>
        <end position="186"/>
    </location>
</feature>
<feature type="turn" evidence="4">
    <location>
        <begin position="188"/>
        <end position="192"/>
    </location>
</feature>
<feature type="helix" evidence="4">
    <location>
        <begin position="193"/>
        <end position="206"/>
    </location>
</feature>
<feature type="strand" evidence="3">
    <location>
        <begin position="208"/>
        <end position="211"/>
    </location>
</feature>
<feature type="helix" evidence="4">
    <location>
        <begin position="214"/>
        <end position="217"/>
    </location>
</feature>
<feature type="turn" evidence="4">
    <location>
        <begin position="219"/>
        <end position="222"/>
    </location>
</feature>
<feature type="turn" evidence="4">
    <location>
        <begin position="225"/>
        <end position="228"/>
    </location>
</feature>
<feature type="helix" evidence="4">
    <location>
        <begin position="232"/>
        <end position="256"/>
    </location>
</feature>
<feature type="strand" evidence="4">
    <location>
        <begin position="263"/>
        <end position="265"/>
    </location>
</feature>
<feature type="helix" evidence="4">
    <location>
        <begin position="267"/>
        <end position="288"/>
    </location>
</feature>
<feature type="helix" evidence="4">
    <location>
        <begin position="294"/>
        <end position="303"/>
    </location>
</feature>
<feature type="helix" evidence="4">
    <location>
        <begin position="305"/>
        <end position="322"/>
    </location>
</feature>
<comment type="function">
    <text>NDH-1 shuttles electrons from NADH, via FMN and iron-sulfur (Fe-S) centers, to quinones in the respiratory chain. The immediate electron acceptor for the enzyme in this species is believed to be ubiquinone. Couples the redox reaction to proton translocation (for every two electrons transferred, four hydrogen ions are translocated across the cytoplasmic membrane), and thus conserves the redox energy in a proton gradient. This subunit may bind ubiquinone.</text>
</comment>
<comment type="catalytic activity">
    <reaction>
        <text>a quinone + NADH + 5 H(+)(in) = a quinol + NAD(+) + 4 H(+)(out)</text>
        <dbReference type="Rhea" id="RHEA:57888"/>
        <dbReference type="ChEBI" id="CHEBI:15378"/>
        <dbReference type="ChEBI" id="CHEBI:24646"/>
        <dbReference type="ChEBI" id="CHEBI:57540"/>
        <dbReference type="ChEBI" id="CHEBI:57945"/>
        <dbReference type="ChEBI" id="CHEBI:132124"/>
    </reaction>
</comment>
<comment type="subunit">
    <text>NDH-1 is composed of 13 different subunits. Subunits NuoA, H, J, K, L, M, N constitute the membrane sector of the complex.</text>
</comment>
<comment type="subcellular location">
    <subcellularLocation>
        <location>Cell inner membrane</location>
        <topology>Multi-pass membrane protein</topology>
    </subcellularLocation>
</comment>
<comment type="similarity">
    <text evidence="2">Belongs to the complex I subunit 1 family.</text>
</comment>
<evidence type="ECO:0000255" key="1"/>
<evidence type="ECO:0000305" key="2"/>
<evidence type="ECO:0007829" key="3">
    <source>
        <dbReference type="PDB" id="7NYR"/>
    </source>
</evidence>
<evidence type="ECO:0007829" key="4">
    <source>
        <dbReference type="PDB" id="7Z7V"/>
    </source>
</evidence>
<evidence type="ECO:0007829" key="5">
    <source>
        <dbReference type="PDB" id="7Z83"/>
    </source>
</evidence>
<evidence type="ECO:0007829" key="6">
    <source>
        <dbReference type="PDB" id="7Z84"/>
    </source>
</evidence>
<keyword id="KW-0002">3D-structure</keyword>
<keyword id="KW-0997">Cell inner membrane</keyword>
<keyword id="KW-1003">Cell membrane</keyword>
<keyword id="KW-0472">Membrane</keyword>
<keyword id="KW-0520">NAD</keyword>
<keyword id="KW-0874">Quinone</keyword>
<keyword id="KW-1185">Reference proteome</keyword>
<keyword id="KW-1278">Translocase</keyword>
<keyword id="KW-0812">Transmembrane</keyword>
<keyword id="KW-1133">Transmembrane helix</keyword>
<keyword id="KW-0830">Ubiquinone</keyword>
<organism>
    <name type="scientific">Escherichia coli (strain K12)</name>
    <dbReference type="NCBI Taxonomy" id="83333"/>
    <lineage>
        <taxon>Bacteria</taxon>
        <taxon>Pseudomonadati</taxon>
        <taxon>Pseudomonadota</taxon>
        <taxon>Gammaproteobacteria</taxon>
        <taxon>Enterobacterales</taxon>
        <taxon>Enterobacteriaceae</taxon>
        <taxon>Escherichia</taxon>
    </lineage>
</organism>